<sequence length="179" mass="17914">MNAIKTAVAAVTAAASLVAFSPAEAATATANLNVTANVGGACSIGSGAGGGTLNFGTYDPVVVNSALGVDLFGTGSLSVQCTLLSTAVITLGQGLYPAAGSTAAVPLRRMRNAASTDYLSYFLYMDVTRLIAWGNTSGTGLPFLGLGLPVPVQVYGTVPRGQNVPSGTYNDTVVATITF</sequence>
<dbReference type="EMBL" id="M74056">
    <property type="protein sequence ID" value="AAA25403.1"/>
    <property type="molecule type" value="Genomic_DNA"/>
</dbReference>
<dbReference type="PIR" id="A42367">
    <property type="entry name" value="A42367"/>
</dbReference>
<dbReference type="RefSeq" id="WP_020479238.1">
    <property type="nucleotide sequence ID" value="NZ_FNOH01000049.1"/>
</dbReference>
<dbReference type="GO" id="GO:0005576">
    <property type="term" value="C:extracellular region"/>
    <property type="evidence" value="ECO:0007669"/>
    <property type="project" value="UniProtKB-SubCell"/>
</dbReference>
<dbReference type="GO" id="GO:0030435">
    <property type="term" value="P:sporulation resulting in formation of a cellular spore"/>
    <property type="evidence" value="ECO:0007669"/>
    <property type="project" value="UniProtKB-KW"/>
</dbReference>
<dbReference type="InterPro" id="IPR053167">
    <property type="entry name" value="Spore_coat_component"/>
</dbReference>
<dbReference type="InterPro" id="IPR007893">
    <property type="entry name" value="Spore_coat_U/FanG"/>
</dbReference>
<dbReference type="PANTHER" id="PTHR37089">
    <property type="entry name" value="PROTEIN U-RELATED"/>
    <property type="match status" value="1"/>
</dbReference>
<dbReference type="Pfam" id="PF05229">
    <property type="entry name" value="SCPU"/>
    <property type="match status" value="1"/>
</dbReference>
<dbReference type="SMART" id="SM00972">
    <property type="entry name" value="SCPU"/>
    <property type="match status" value="1"/>
</dbReference>
<proteinExistence type="predicted"/>
<accession>P27755</accession>
<organism>
    <name type="scientific">Myxococcus xanthus</name>
    <dbReference type="NCBI Taxonomy" id="34"/>
    <lineage>
        <taxon>Bacteria</taxon>
        <taxon>Pseudomonadati</taxon>
        <taxon>Myxococcota</taxon>
        <taxon>Myxococcia</taxon>
        <taxon>Myxococcales</taxon>
        <taxon>Cystobacterineae</taxon>
        <taxon>Myxococcaceae</taxon>
        <taxon>Myxococcus</taxon>
    </lineage>
</organism>
<keyword id="KW-0964">Secreted</keyword>
<keyword id="KW-0732">Signal</keyword>
<keyword id="KW-0749">Sporulation</keyword>
<feature type="signal peptide">
    <location>
        <begin position="1"/>
        <end position="25"/>
    </location>
</feature>
<feature type="chain" id="PRO_0000022158" description="Protein U">
    <location>
        <begin position="26"/>
        <end position="179"/>
    </location>
</feature>
<gene>
    <name type="primary">pru</name>
</gene>
<protein>
    <recommendedName>
        <fullName>Protein U</fullName>
    </recommendedName>
</protein>
<reference key="1">
    <citation type="journal article" date="1991" name="J. Bacteriol.">
        <title>Protein U, a late-developmental spore coat protein of Myxococcus xanthus, is a secretory protein.</title>
        <authorList>
            <person name="Inouye S."/>
            <person name="Inouye M."/>
            <person name="Gollop R."/>
        </authorList>
    </citation>
    <scope>NUCLEOTIDE SEQUENCE [GENOMIC DNA]</scope>
</reference>
<name>PRU_MYXXA</name>
<comment type="function">
    <text>A late-developmental spore coat protein.</text>
</comment>
<comment type="subcellular location">
    <subcellularLocation>
        <location>Secreted</location>
    </subcellularLocation>
    <subcellularLocation>
        <location>Spore</location>
        <location>Perispore</location>
    </subcellularLocation>
    <text>Secreted across the membrane to assemble on the spore surface.</text>
</comment>